<feature type="chain" id="PRO_0000295700" description="E3 ubiquitin-protein ligase RNF181">
    <location>
        <begin position="1"/>
        <end position="156"/>
    </location>
</feature>
<feature type="zinc finger region" description="RING-type; atypical" evidence="2">
    <location>
        <begin position="79"/>
        <end position="120"/>
    </location>
</feature>
<keyword id="KW-0479">Metal-binding</keyword>
<keyword id="KW-1185">Reference proteome</keyword>
<keyword id="KW-0808">Transferase</keyword>
<keyword id="KW-0833">Ubl conjugation pathway</keyword>
<keyword id="KW-0862">Zinc</keyword>
<keyword id="KW-0863">Zinc-finger</keyword>
<dbReference type="EC" id="2.3.2.27" evidence="1"/>
<dbReference type="EMBL" id="BC073002">
    <property type="protein sequence ID" value="AAH73002.1"/>
    <property type="molecule type" value="mRNA"/>
</dbReference>
<dbReference type="RefSeq" id="NP_001085602.1">
    <property type="nucleotide sequence ID" value="NM_001092133.1"/>
</dbReference>
<dbReference type="SMR" id="Q6GPV5"/>
<dbReference type="DNASU" id="444028"/>
<dbReference type="GeneID" id="444028"/>
<dbReference type="KEGG" id="xla:444028"/>
<dbReference type="AGR" id="Xenbase:XB-GENE-6256263"/>
<dbReference type="CTD" id="444028"/>
<dbReference type="Xenbase" id="XB-GENE-6256263">
    <property type="gene designation" value="rnf181.S"/>
</dbReference>
<dbReference type="OMA" id="EHLHGAM"/>
<dbReference type="OrthoDB" id="21204at2759"/>
<dbReference type="UniPathway" id="UPA00143"/>
<dbReference type="Proteomes" id="UP000186698">
    <property type="component" value="Chromosome 3S"/>
</dbReference>
<dbReference type="Bgee" id="444028">
    <property type="expression patterns" value="Expressed in oocyte and 19 other cell types or tissues"/>
</dbReference>
<dbReference type="GO" id="GO:0005737">
    <property type="term" value="C:cytoplasm"/>
    <property type="evidence" value="ECO:0000318"/>
    <property type="project" value="GO_Central"/>
</dbReference>
<dbReference type="GO" id="GO:0061630">
    <property type="term" value="F:ubiquitin protein ligase activity"/>
    <property type="evidence" value="ECO:0000250"/>
    <property type="project" value="UniProtKB"/>
</dbReference>
<dbReference type="GO" id="GO:0008270">
    <property type="term" value="F:zinc ion binding"/>
    <property type="evidence" value="ECO:0007669"/>
    <property type="project" value="UniProtKB-KW"/>
</dbReference>
<dbReference type="GO" id="GO:0016567">
    <property type="term" value="P:protein ubiquitination"/>
    <property type="evidence" value="ECO:0000318"/>
    <property type="project" value="GO_Central"/>
</dbReference>
<dbReference type="CDD" id="cd16669">
    <property type="entry name" value="RING-H2_RNF181"/>
    <property type="match status" value="1"/>
</dbReference>
<dbReference type="FunFam" id="3.30.40.10:FF:000127">
    <property type="entry name" value="E3 ubiquitin-protein ligase RNF181"/>
    <property type="match status" value="1"/>
</dbReference>
<dbReference type="Gene3D" id="3.30.40.10">
    <property type="entry name" value="Zinc/RING finger domain, C3HC4 (zinc finger)"/>
    <property type="match status" value="1"/>
</dbReference>
<dbReference type="InterPro" id="IPR001841">
    <property type="entry name" value="Znf_RING"/>
</dbReference>
<dbReference type="InterPro" id="IPR013083">
    <property type="entry name" value="Znf_RING/FYVE/PHD"/>
</dbReference>
<dbReference type="PANTHER" id="PTHR15710">
    <property type="entry name" value="E3 UBIQUITIN-PROTEIN LIGASE PRAJA"/>
    <property type="match status" value="1"/>
</dbReference>
<dbReference type="PANTHER" id="PTHR15710:SF160">
    <property type="entry name" value="E3 UBIQUITIN-PROTEIN LIGASE RNF181"/>
    <property type="match status" value="1"/>
</dbReference>
<dbReference type="Pfam" id="PF13639">
    <property type="entry name" value="zf-RING_2"/>
    <property type="match status" value="1"/>
</dbReference>
<dbReference type="SMART" id="SM00184">
    <property type="entry name" value="RING"/>
    <property type="match status" value="1"/>
</dbReference>
<dbReference type="SUPFAM" id="SSF57850">
    <property type="entry name" value="RING/U-box"/>
    <property type="match status" value="1"/>
</dbReference>
<dbReference type="PROSITE" id="PS50089">
    <property type="entry name" value="ZF_RING_2"/>
    <property type="match status" value="1"/>
</dbReference>
<comment type="function">
    <text evidence="1">E3 ubiquitin-protein ligase which accepts ubiquitin from an E2 ubiquitin-conjugating enzyme in the form of a thioester and then directly transfers the ubiquitin to targeted substrates. Catalyzes monoubiquitination of 26S proteasome subunit PSMC2/RPT1.</text>
</comment>
<comment type="catalytic activity">
    <reaction evidence="1">
        <text>S-ubiquitinyl-[E2 ubiquitin-conjugating enzyme]-L-cysteine + [acceptor protein]-L-lysine = [E2 ubiquitin-conjugating enzyme]-L-cysteine + N(6)-ubiquitinyl-[acceptor protein]-L-lysine.</text>
        <dbReference type="EC" id="2.3.2.27"/>
    </reaction>
</comment>
<comment type="pathway">
    <text evidence="1">Protein modification; protein ubiquitination.</text>
</comment>
<comment type="similarity">
    <text evidence="3">Belongs to the RNF181 family.</text>
</comment>
<proteinExistence type="evidence at transcript level"/>
<evidence type="ECO:0000250" key="1">
    <source>
        <dbReference type="UniProtKB" id="Q9P0P0"/>
    </source>
</evidence>
<evidence type="ECO:0000255" key="2">
    <source>
        <dbReference type="PROSITE-ProRule" id="PRU00175"/>
    </source>
</evidence>
<evidence type="ECO:0000305" key="3"/>
<name>RN181_XENLA</name>
<organism>
    <name type="scientific">Xenopus laevis</name>
    <name type="common">African clawed frog</name>
    <dbReference type="NCBI Taxonomy" id="8355"/>
    <lineage>
        <taxon>Eukaryota</taxon>
        <taxon>Metazoa</taxon>
        <taxon>Chordata</taxon>
        <taxon>Craniata</taxon>
        <taxon>Vertebrata</taxon>
        <taxon>Euteleostomi</taxon>
        <taxon>Amphibia</taxon>
        <taxon>Batrachia</taxon>
        <taxon>Anura</taxon>
        <taxon>Pipoidea</taxon>
        <taxon>Pipidae</taxon>
        <taxon>Xenopodinae</taxon>
        <taxon>Xenopus</taxon>
        <taxon>Xenopus</taxon>
    </lineage>
</organism>
<gene>
    <name type="primary">rnf181</name>
</gene>
<protein>
    <recommendedName>
        <fullName evidence="3">E3 ubiquitin-protein ligase RNF181</fullName>
        <ecNumber evidence="1">2.3.2.27</ecNumber>
    </recommendedName>
    <alternativeName>
        <fullName>RING finger protein 181</fullName>
    </alternativeName>
</protein>
<reference key="1">
    <citation type="submission" date="2004-06" db="EMBL/GenBank/DDBJ databases">
        <authorList>
            <consortium name="NIH - Xenopus Gene Collection (XGC) project"/>
        </authorList>
    </citation>
    <scope>NUCLEOTIDE SEQUENCE [LARGE SCALE MRNA]</scope>
    <source>
        <tissue>Embryo</tissue>
    </source>
</reference>
<sequence length="156" mass="17841">MASYFDEHNCEPTVPEEQYRQNALLELARSLLSGMDIDLGAVDFTEWDQRLPPPASKKVVESLPKVTVTPEQADAALKCPVCLLEFEEGETVRQLPCEHLFHSACILPWLGKTNSCPLCRHELPTDSPDYEEFKQEKARRQQKEHRLECLHGAMYT</sequence>
<accession>Q6GPV5</accession>